<proteinExistence type="inferred from homology"/>
<comment type="function">
    <text>Stimulates the secretion of gonadotropins.</text>
</comment>
<comment type="subcellular location">
    <subcellularLocation>
        <location>Secreted</location>
    </subcellularLocation>
</comment>
<comment type="similarity">
    <text evidence="3">Belongs to the GnRH family.</text>
</comment>
<feature type="signal peptide" evidence="1">
    <location>
        <begin position="1"/>
        <end position="23"/>
    </location>
</feature>
<feature type="chain" id="PRO_0000012499" description="Progonadoliberin-3">
    <location>
        <begin position="24"/>
        <end position="94"/>
    </location>
</feature>
<feature type="peptide" id="PRO_0000012500" description="Gonadoliberin-3">
    <location>
        <begin position="24"/>
        <end position="33"/>
    </location>
</feature>
<feature type="peptide" id="PRO_0000012501" description="GnRH-associated peptide 3" evidence="2">
    <location>
        <begin position="37"/>
        <end position="94"/>
    </location>
</feature>
<feature type="modified residue" description="Pyrrolidone carboxylic acid" evidence="1">
    <location>
        <position position="24"/>
    </location>
</feature>
<feature type="modified residue" description="Glycine amide" evidence="1">
    <location>
        <position position="33"/>
    </location>
</feature>
<dbReference type="EMBL" id="U30301">
    <property type="protein sequence ID" value="AAC59888.1"/>
    <property type="molecule type" value="mRNA"/>
</dbReference>
<dbReference type="Proteomes" id="UP000515129">
    <property type="component" value="Unplaced"/>
</dbReference>
<dbReference type="GO" id="GO:0005615">
    <property type="term" value="C:extracellular space"/>
    <property type="evidence" value="ECO:0000250"/>
    <property type="project" value="UniProtKB"/>
</dbReference>
<dbReference type="GO" id="GO:0005183">
    <property type="term" value="F:gonadotropin hormone-releasing hormone activity"/>
    <property type="evidence" value="ECO:0007669"/>
    <property type="project" value="TreeGrafter"/>
</dbReference>
<dbReference type="GO" id="GO:0031530">
    <property type="term" value="F:gonadotropin-releasing hormone receptor binding"/>
    <property type="evidence" value="ECO:0007669"/>
    <property type="project" value="TreeGrafter"/>
</dbReference>
<dbReference type="InterPro" id="IPR002012">
    <property type="entry name" value="GnRH"/>
</dbReference>
<dbReference type="InterPro" id="IPR019792">
    <property type="entry name" value="Gonadoliberin"/>
</dbReference>
<dbReference type="PANTHER" id="PTHR10522">
    <property type="entry name" value="GONADOLIBERIN"/>
    <property type="match status" value="1"/>
</dbReference>
<dbReference type="PANTHER" id="PTHR10522:SF6">
    <property type="entry name" value="PROGONADOLIBERIN-2"/>
    <property type="match status" value="1"/>
</dbReference>
<dbReference type="Pfam" id="PF00446">
    <property type="entry name" value="GnRH"/>
    <property type="match status" value="1"/>
</dbReference>
<dbReference type="PROSITE" id="PS00473">
    <property type="entry name" value="GNRH"/>
    <property type="match status" value="1"/>
</dbReference>
<sequence>MEGKGRVLVQLLMLACVLEVSLCQHWSYGWLPGGKRSVGEVEATFRMMDSGDAVLSIPMDSPMERLSPIHIVSEVDAEGLPLKEQRFPNRRGRD</sequence>
<accession>P51917</accession>
<reference key="1">
    <citation type="journal article" date="1996" name="Gen. Comp. Endocrinol.">
        <title>Expression of salmon gonadotropin-releasing hormone (GnRH) and chicken GnRH-II precursor messenger ribonucleic acids in the brain and ovary of goldfish.</title>
        <authorList>
            <person name="Lin X.-W."/>
            <person name="Peter R.E."/>
        </authorList>
    </citation>
    <scope>NUCLEOTIDE SEQUENCE [MRNA]</scope>
</reference>
<protein>
    <recommendedName>
        <fullName>Progonadoliberin-3</fullName>
    </recommendedName>
    <alternativeName>
        <fullName>Progonadoliberin III</fullName>
    </alternativeName>
    <component>
        <recommendedName>
            <fullName>Gonadoliberin-3</fullName>
        </recommendedName>
        <alternativeName>
            <fullName>Gonadoliberin III</fullName>
        </alternativeName>
        <alternativeName>
            <fullName>Gonadotropin-releasing hormone III</fullName>
            <shortName>GnRH III</shortName>
        </alternativeName>
        <alternativeName>
            <fullName>Luliberin III</fullName>
        </alternativeName>
        <alternativeName>
            <fullName>Luteinizing hormone-releasing hormone III</fullName>
            <shortName>LH-RH III</shortName>
        </alternativeName>
    </component>
    <component>
        <recommendedName>
            <fullName>GnRH-associated peptide 3</fullName>
        </recommendedName>
        <alternativeName>
            <fullName>GnRH-associated peptide III</fullName>
        </alternativeName>
    </component>
</protein>
<gene>
    <name type="primary">gnrh3</name>
</gene>
<name>GON3_CARAU</name>
<keyword id="KW-0027">Amidation</keyword>
<keyword id="KW-0165">Cleavage on pair of basic residues</keyword>
<keyword id="KW-0372">Hormone</keyword>
<keyword id="KW-0873">Pyrrolidone carboxylic acid</keyword>
<keyword id="KW-1185">Reference proteome</keyword>
<keyword id="KW-0964">Secreted</keyword>
<keyword id="KW-0732">Signal</keyword>
<organism>
    <name type="scientific">Carassius auratus</name>
    <name type="common">Goldfish</name>
    <dbReference type="NCBI Taxonomy" id="7957"/>
    <lineage>
        <taxon>Eukaryota</taxon>
        <taxon>Metazoa</taxon>
        <taxon>Chordata</taxon>
        <taxon>Craniata</taxon>
        <taxon>Vertebrata</taxon>
        <taxon>Euteleostomi</taxon>
        <taxon>Actinopterygii</taxon>
        <taxon>Neopterygii</taxon>
        <taxon>Teleostei</taxon>
        <taxon>Ostariophysi</taxon>
        <taxon>Cypriniformes</taxon>
        <taxon>Cyprinidae</taxon>
        <taxon>Cyprininae</taxon>
        <taxon>Carassius</taxon>
    </lineage>
</organism>
<evidence type="ECO:0000250" key="1"/>
<evidence type="ECO:0000255" key="2"/>
<evidence type="ECO:0000305" key="3"/>